<protein>
    <recommendedName>
        <fullName evidence="1">Serine/threonine transporter SstT</fullName>
    </recommendedName>
    <alternativeName>
        <fullName evidence="1">Na(+)/serine-threonine symporter</fullName>
    </alternativeName>
</protein>
<feature type="chain" id="PRO_1000197545" description="Serine/threonine transporter SstT">
    <location>
        <begin position="1"/>
        <end position="400"/>
    </location>
</feature>
<feature type="transmembrane region" description="Helical" evidence="1">
    <location>
        <begin position="14"/>
        <end position="34"/>
    </location>
</feature>
<feature type="transmembrane region" description="Helical" evidence="1">
    <location>
        <begin position="48"/>
        <end position="68"/>
    </location>
</feature>
<feature type="transmembrane region" description="Helical" evidence="1">
    <location>
        <begin position="76"/>
        <end position="96"/>
    </location>
</feature>
<feature type="transmembrane region" description="Helical" evidence="1">
    <location>
        <begin position="136"/>
        <end position="156"/>
    </location>
</feature>
<feature type="transmembrane region" description="Helical" evidence="1">
    <location>
        <begin position="177"/>
        <end position="197"/>
    </location>
</feature>
<feature type="transmembrane region" description="Helical" evidence="1">
    <location>
        <begin position="211"/>
        <end position="231"/>
    </location>
</feature>
<feature type="transmembrane region" description="Helical" evidence="1">
    <location>
        <begin position="285"/>
        <end position="305"/>
    </location>
</feature>
<feature type="transmembrane region" description="Helical" evidence="1">
    <location>
        <begin position="311"/>
        <end position="331"/>
    </location>
</feature>
<feature type="transmembrane region" description="Helical" evidence="1">
    <location>
        <begin position="349"/>
        <end position="371"/>
    </location>
</feature>
<dbReference type="EMBL" id="CP001172">
    <property type="protein sequence ID" value="ACJ58755.1"/>
    <property type="molecule type" value="Genomic_DNA"/>
</dbReference>
<dbReference type="RefSeq" id="WP_000889009.1">
    <property type="nucleotide sequence ID" value="NZ_CP001172.1"/>
</dbReference>
<dbReference type="SMR" id="B7H3P4"/>
<dbReference type="HOGENOM" id="CLU_044581_0_0_6"/>
<dbReference type="Proteomes" id="UP000006924">
    <property type="component" value="Chromosome"/>
</dbReference>
<dbReference type="GO" id="GO:0005886">
    <property type="term" value="C:plasma membrane"/>
    <property type="evidence" value="ECO:0007669"/>
    <property type="project" value="UniProtKB-SubCell"/>
</dbReference>
<dbReference type="GO" id="GO:0015171">
    <property type="term" value="F:amino acid transmembrane transporter activity"/>
    <property type="evidence" value="ECO:0007669"/>
    <property type="project" value="UniProtKB-UniRule"/>
</dbReference>
<dbReference type="GO" id="GO:0015293">
    <property type="term" value="F:symporter activity"/>
    <property type="evidence" value="ECO:0007669"/>
    <property type="project" value="UniProtKB-UniRule"/>
</dbReference>
<dbReference type="GO" id="GO:0032329">
    <property type="term" value="P:serine transport"/>
    <property type="evidence" value="ECO:0007669"/>
    <property type="project" value="InterPro"/>
</dbReference>
<dbReference type="GO" id="GO:0015826">
    <property type="term" value="P:threonine transport"/>
    <property type="evidence" value="ECO:0007669"/>
    <property type="project" value="InterPro"/>
</dbReference>
<dbReference type="FunFam" id="1.10.3860.10:FF:000003">
    <property type="entry name" value="Serine/threonine transporter sstT"/>
    <property type="match status" value="1"/>
</dbReference>
<dbReference type="Gene3D" id="1.10.3860.10">
    <property type="entry name" value="Sodium:dicarboxylate symporter"/>
    <property type="match status" value="1"/>
</dbReference>
<dbReference type="HAMAP" id="MF_01582">
    <property type="entry name" value="Ser_Thr_transp_SstT"/>
    <property type="match status" value="1"/>
</dbReference>
<dbReference type="InterPro" id="IPR001991">
    <property type="entry name" value="Na-dicarboxylate_symporter"/>
</dbReference>
<dbReference type="InterPro" id="IPR036458">
    <property type="entry name" value="Na:dicarbo_symporter_sf"/>
</dbReference>
<dbReference type="InterPro" id="IPR023025">
    <property type="entry name" value="Ser_Thr_transp_SstT"/>
</dbReference>
<dbReference type="NCBIfam" id="NF010151">
    <property type="entry name" value="PRK13628.1"/>
    <property type="match status" value="1"/>
</dbReference>
<dbReference type="PANTHER" id="PTHR42865">
    <property type="entry name" value="PROTON/GLUTAMATE-ASPARTATE SYMPORTER"/>
    <property type="match status" value="1"/>
</dbReference>
<dbReference type="PANTHER" id="PTHR42865:SF7">
    <property type="entry name" value="PROTON_GLUTAMATE-ASPARTATE SYMPORTER"/>
    <property type="match status" value="1"/>
</dbReference>
<dbReference type="Pfam" id="PF00375">
    <property type="entry name" value="SDF"/>
    <property type="match status" value="1"/>
</dbReference>
<dbReference type="PRINTS" id="PR00173">
    <property type="entry name" value="EDTRNSPORT"/>
</dbReference>
<dbReference type="SUPFAM" id="SSF118215">
    <property type="entry name" value="Proton glutamate symport protein"/>
    <property type="match status" value="1"/>
</dbReference>
<evidence type="ECO:0000255" key="1">
    <source>
        <dbReference type="HAMAP-Rule" id="MF_01582"/>
    </source>
</evidence>
<proteinExistence type="inferred from homology"/>
<keyword id="KW-0029">Amino-acid transport</keyword>
<keyword id="KW-0997">Cell inner membrane</keyword>
<keyword id="KW-1003">Cell membrane</keyword>
<keyword id="KW-0472">Membrane</keyword>
<keyword id="KW-0769">Symport</keyword>
<keyword id="KW-0812">Transmembrane</keyword>
<keyword id="KW-1133">Transmembrane helix</keyword>
<keyword id="KW-0813">Transport</keyword>
<accession>B7H3P4</accession>
<name>SSTT_ACIB3</name>
<sequence>MLEFFSRLSLVTKIIIAIILGIGVALLFPTVTPYLSLFGELFIKALKSVAPILVFVLVLSSIANFQVGHSANLRPVLLLYVVGMLLAAFSAVIASLSFPSTLYLNTVSHNNLQAPGSLADILKNLLLSFIANPVQAISEANFIGILAWAIGLGLAMRHSSDTTKQVMQDVSHAVSAIIHKVIAFAPVGIFGLVAVTFADAGLATLESYAQLLVVLLGTMLFVALVINPILVGLTIRGNPYPLVFKCLKESGITAFFTRSSAANIPVNLDLAERLGVNPSTASVSIPLGATVNMAGAAVTITVLTLATVHTLGIHVDLATMIILSVVATISACGASGVAGGSLLLIPVACSLFGISSEIAMQVVAVGMIISVLQDSTETALNSSTDVLFTAAVDIRSRQNS</sequence>
<organism>
    <name type="scientific">Acinetobacter baumannii (strain AB307-0294)</name>
    <dbReference type="NCBI Taxonomy" id="557600"/>
    <lineage>
        <taxon>Bacteria</taxon>
        <taxon>Pseudomonadati</taxon>
        <taxon>Pseudomonadota</taxon>
        <taxon>Gammaproteobacteria</taxon>
        <taxon>Moraxellales</taxon>
        <taxon>Moraxellaceae</taxon>
        <taxon>Acinetobacter</taxon>
        <taxon>Acinetobacter calcoaceticus/baumannii complex</taxon>
    </lineage>
</organism>
<reference key="1">
    <citation type="journal article" date="2008" name="J. Bacteriol.">
        <title>Comparative genome sequence analysis of multidrug-resistant Acinetobacter baumannii.</title>
        <authorList>
            <person name="Adams M.D."/>
            <person name="Goglin K."/>
            <person name="Molyneaux N."/>
            <person name="Hujer K.M."/>
            <person name="Lavender H."/>
            <person name="Jamison J.J."/>
            <person name="MacDonald I.J."/>
            <person name="Martin K.M."/>
            <person name="Russo T."/>
            <person name="Campagnari A.A."/>
            <person name="Hujer A.M."/>
            <person name="Bonomo R.A."/>
            <person name="Gill S.R."/>
        </authorList>
    </citation>
    <scope>NUCLEOTIDE SEQUENCE [LARGE SCALE GENOMIC DNA]</scope>
    <source>
        <strain>AB307-0294</strain>
    </source>
</reference>
<gene>
    <name evidence="1" type="primary">sstT</name>
    <name type="ordered locus">ABBFA_001939</name>
</gene>
<comment type="function">
    <text evidence="1">Involved in the import of serine and threonine into the cell, with the concomitant import of sodium (symport system).</text>
</comment>
<comment type="catalytic activity">
    <reaction evidence="1">
        <text>L-serine(in) + Na(+)(in) = L-serine(out) + Na(+)(out)</text>
        <dbReference type="Rhea" id="RHEA:29575"/>
        <dbReference type="ChEBI" id="CHEBI:29101"/>
        <dbReference type="ChEBI" id="CHEBI:33384"/>
    </reaction>
    <physiologicalReaction direction="right-to-left" evidence="1">
        <dbReference type="Rhea" id="RHEA:29577"/>
    </physiologicalReaction>
</comment>
<comment type="catalytic activity">
    <reaction evidence="1">
        <text>L-threonine(in) + Na(+)(in) = L-threonine(out) + Na(+)(out)</text>
        <dbReference type="Rhea" id="RHEA:69999"/>
        <dbReference type="ChEBI" id="CHEBI:29101"/>
        <dbReference type="ChEBI" id="CHEBI:57926"/>
    </reaction>
    <physiologicalReaction direction="right-to-left" evidence="1">
        <dbReference type="Rhea" id="RHEA:70001"/>
    </physiologicalReaction>
</comment>
<comment type="subcellular location">
    <subcellularLocation>
        <location evidence="1">Cell inner membrane</location>
        <topology evidence="1">Multi-pass membrane protein</topology>
    </subcellularLocation>
</comment>
<comment type="similarity">
    <text evidence="1">Belongs to the dicarboxylate/amino acid:cation symporter (DAACS) (TC 2.A.23) family.</text>
</comment>